<feature type="chain" id="PRO_0000317671" description="Allantoinase">
    <location>
        <begin position="1"/>
        <end position="454"/>
    </location>
</feature>
<feature type="binding site" evidence="1">
    <location>
        <position position="59"/>
    </location>
    <ligand>
        <name>Zn(2+)</name>
        <dbReference type="ChEBI" id="CHEBI:29105"/>
        <label>1</label>
    </ligand>
</feature>
<feature type="binding site" evidence="1">
    <location>
        <position position="61"/>
    </location>
    <ligand>
        <name>Zn(2+)</name>
        <dbReference type="ChEBI" id="CHEBI:29105"/>
        <label>1</label>
    </ligand>
</feature>
<feature type="binding site" description="via carbamate group" evidence="1">
    <location>
        <position position="150"/>
    </location>
    <ligand>
        <name>Zn(2+)</name>
        <dbReference type="ChEBI" id="CHEBI:29105"/>
        <label>1</label>
    </ligand>
</feature>
<feature type="binding site" description="via carbamate group" evidence="1">
    <location>
        <position position="150"/>
    </location>
    <ligand>
        <name>Zn(2+)</name>
        <dbReference type="ChEBI" id="CHEBI:29105"/>
        <label>2</label>
    </ligand>
</feature>
<feature type="binding site" evidence="1">
    <location>
        <position position="190"/>
    </location>
    <ligand>
        <name>Zn(2+)</name>
        <dbReference type="ChEBI" id="CHEBI:29105"/>
        <label>2</label>
    </ligand>
</feature>
<feature type="binding site" evidence="1">
    <location>
        <position position="246"/>
    </location>
    <ligand>
        <name>Zn(2+)</name>
        <dbReference type="ChEBI" id="CHEBI:29105"/>
        <label>2</label>
    </ligand>
</feature>
<feature type="binding site" evidence="1">
    <location>
        <position position="319"/>
    </location>
    <ligand>
        <name>Zn(2+)</name>
        <dbReference type="ChEBI" id="CHEBI:29105"/>
        <label>1</label>
    </ligand>
</feature>
<feature type="modified residue" description="N6-carboxylysine" evidence="1">
    <location>
        <position position="150"/>
    </location>
</feature>
<gene>
    <name evidence="1" type="primary">allB</name>
    <name evidence="1" type="synonym">pucH</name>
    <name type="ordered locus">BLi01126</name>
    <name type="ordered locus">BL01094</name>
</gene>
<organism>
    <name type="scientific">Bacillus licheniformis (strain ATCC 14580 / DSM 13 / JCM 2505 / CCUG 7422 / NBRC 12200 / NCIMB 9375 / NCTC 10341 / NRRL NRS-1264 / Gibson 46)</name>
    <dbReference type="NCBI Taxonomy" id="279010"/>
    <lineage>
        <taxon>Bacteria</taxon>
        <taxon>Bacillati</taxon>
        <taxon>Bacillota</taxon>
        <taxon>Bacilli</taxon>
        <taxon>Bacillales</taxon>
        <taxon>Bacillaceae</taxon>
        <taxon>Bacillus</taxon>
    </lineage>
</organism>
<accession>Q65LN0</accession>
<accession>Q62X22</accession>
<reference key="1">
    <citation type="journal article" date="2004" name="J. Mol. Microbiol. Biotechnol.">
        <title>The complete genome sequence of Bacillus licheniformis DSM13, an organism with great industrial potential.</title>
        <authorList>
            <person name="Veith B."/>
            <person name="Herzberg C."/>
            <person name="Steckel S."/>
            <person name="Feesche J."/>
            <person name="Maurer K.H."/>
            <person name="Ehrenreich P."/>
            <person name="Baeumer S."/>
            <person name="Henne A."/>
            <person name="Liesegang H."/>
            <person name="Merkl R."/>
            <person name="Ehrenreich A."/>
            <person name="Gottschalk G."/>
        </authorList>
    </citation>
    <scope>NUCLEOTIDE SEQUENCE [LARGE SCALE GENOMIC DNA]</scope>
    <source>
        <strain>ATCC 14580 / DSM 13 / JCM 2505 / CCUG 7422 / NBRC 12200 / NCIMB 9375 / NCTC 10341 / NRRL NRS-1264 / Gibson 46</strain>
    </source>
</reference>
<reference key="2">
    <citation type="journal article" date="2004" name="Genome Biol.">
        <title>Complete genome sequence of the industrial bacterium Bacillus licheniformis and comparisons with closely related Bacillus species.</title>
        <authorList>
            <person name="Rey M.W."/>
            <person name="Ramaiya P."/>
            <person name="Nelson B.A."/>
            <person name="Brody-Karpin S.D."/>
            <person name="Zaretsky E.J."/>
            <person name="Tang M."/>
            <person name="Lopez de Leon A."/>
            <person name="Xiang H."/>
            <person name="Gusti V."/>
            <person name="Clausen I.G."/>
            <person name="Olsen P.B."/>
            <person name="Rasmussen M.D."/>
            <person name="Andersen J.T."/>
            <person name="Joergensen P.L."/>
            <person name="Larsen T.S."/>
            <person name="Sorokin A."/>
            <person name="Bolotin A."/>
            <person name="Lapidus A."/>
            <person name="Galleron N."/>
            <person name="Ehrlich S.D."/>
            <person name="Berka R.M."/>
        </authorList>
    </citation>
    <scope>NUCLEOTIDE SEQUENCE [LARGE SCALE GENOMIC DNA]</scope>
    <source>
        <strain>ATCC 14580 / DSM 13 / JCM 2505 / CCUG 7422 / NBRC 12200 / NCIMB 9375 / NCTC 10341 / NRRL NRS-1264 / Gibson 46</strain>
    </source>
</reference>
<evidence type="ECO:0000255" key="1">
    <source>
        <dbReference type="HAMAP-Rule" id="MF_01645"/>
    </source>
</evidence>
<protein>
    <recommendedName>
        <fullName evidence="1">Allantoinase</fullName>
        <ecNumber evidence="1">3.5.2.5</ecNumber>
    </recommendedName>
    <alternativeName>
        <fullName evidence="1">Allantoin-utilizing enzyme</fullName>
    </alternativeName>
</protein>
<keyword id="KW-0378">Hydrolase</keyword>
<keyword id="KW-0479">Metal-binding</keyword>
<keyword id="KW-0659">Purine metabolism</keyword>
<keyword id="KW-1185">Reference proteome</keyword>
<keyword id="KW-0862">Zinc</keyword>
<name>ALLB_BACLD</name>
<comment type="function">
    <text evidence="1">Catalyzes the conversion of allantoin (5-ureidohydantoin) to allantoic acid by hydrolytic cleavage of the five-member hydantoin ring.</text>
</comment>
<comment type="catalytic activity">
    <reaction evidence="1">
        <text>(S)-allantoin + H2O = allantoate + H(+)</text>
        <dbReference type="Rhea" id="RHEA:17029"/>
        <dbReference type="ChEBI" id="CHEBI:15377"/>
        <dbReference type="ChEBI" id="CHEBI:15378"/>
        <dbReference type="ChEBI" id="CHEBI:15678"/>
        <dbReference type="ChEBI" id="CHEBI:17536"/>
        <dbReference type="EC" id="3.5.2.5"/>
    </reaction>
</comment>
<comment type="cofactor">
    <cofactor evidence="1">
        <name>Zn(2+)</name>
        <dbReference type="ChEBI" id="CHEBI:29105"/>
    </cofactor>
    <text evidence="1">Binds 2 Zn(2+) ions per subunit.</text>
</comment>
<comment type="pathway">
    <text evidence="1">Nitrogen metabolism; (S)-allantoin degradation; allantoate from (S)-allantoin: step 1/1.</text>
</comment>
<comment type="subunit">
    <text evidence="1">Homotetramer.</text>
</comment>
<comment type="PTM">
    <text evidence="1">Carboxylation allows a single lysine to coordinate two zinc ions.</text>
</comment>
<comment type="similarity">
    <text evidence="1">Belongs to the metallo-dependent hydrolases superfamily. Allantoinase family.</text>
</comment>
<proteinExistence type="inferred from homology"/>
<dbReference type="EC" id="3.5.2.5" evidence="1"/>
<dbReference type="EMBL" id="CP000002">
    <property type="protein sequence ID" value="AAU22686.1"/>
    <property type="molecule type" value="Genomic_DNA"/>
</dbReference>
<dbReference type="EMBL" id="AE017333">
    <property type="protein sequence ID" value="AAU40034.1"/>
    <property type="molecule type" value="Genomic_DNA"/>
</dbReference>
<dbReference type="RefSeq" id="WP_011197731.1">
    <property type="nucleotide sequence ID" value="NC_006322.1"/>
</dbReference>
<dbReference type="SMR" id="Q65LN0"/>
<dbReference type="STRING" id="279010.BL01094"/>
<dbReference type="GeneID" id="92862295"/>
<dbReference type="KEGG" id="bld:BLi01126"/>
<dbReference type="KEGG" id="bli:BL01094"/>
<dbReference type="eggNOG" id="COG0044">
    <property type="taxonomic scope" value="Bacteria"/>
</dbReference>
<dbReference type="HOGENOM" id="CLU_015572_4_2_9"/>
<dbReference type="BRENDA" id="3.5.2.5">
    <property type="organism ID" value="669"/>
</dbReference>
<dbReference type="UniPathway" id="UPA00395">
    <property type="reaction ID" value="UER00653"/>
</dbReference>
<dbReference type="Proteomes" id="UP000000606">
    <property type="component" value="Chromosome"/>
</dbReference>
<dbReference type="Bgee" id="BL01094">
    <property type="expression patterns" value="Expressed in ovary and 11 other cell types or tissues"/>
</dbReference>
<dbReference type="GO" id="GO:0005737">
    <property type="term" value="C:cytoplasm"/>
    <property type="evidence" value="ECO:0007669"/>
    <property type="project" value="TreeGrafter"/>
</dbReference>
<dbReference type="GO" id="GO:0004038">
    <property type="term" value="F:allantoinase activity"/>
    <property type="evidence" value="ECO:0007669"/>
    <property type="project" value="UniProtKB-UniRule"/>
</dbReference>
<dbReference type="GO" id="GO:0050897">
    <property type="term" value="F:cobalt ion binding"/>
    <property type="evidence" value="ECO:0007669"/>
    <property type="project" value="InterPro"/>
</dbReference>
<dbReference type="GO" id="GO:0008270">
    <property type="term" value="F:zinc ion binding"/>
    <property type="evidence" value="ECO:0007669"/>
    <property type="project" value="InterPro"/>
</dbReference>
<dbReference type="GO" id="GO:0000256">
    <property type="term" value="P:allantoin catabolic process"/>
    <property type="evidence" value="ECO:0007669"/>
    <property type="project" value="UniProtKB-UniRule"/>
</dbReference>
<dbReference type="GO" id="GO:0006145">
    <property type="term" value="P:purine nucleobase catabolic process"/>
    <property type="evidence" value="ECO:0007669"/>
    <property type="project" value="TreeGrafter"/>
</dbReference>
<dbReference type="FunFam" id="3.20.20.140:FF:000013">
    <property type="entry name" value="Allantoinase"/>
    <property type="match status" value="1"/>
</dbReference>
<dbReference type="Gene3D" id="3.20.20.140">
    <property type="entry name" value="Metal-dependent hydrolases"/>
    <property type="match status" value="1"/>
</dbReference>
<dbReference type="Gene3D" id="2.30.40.10">
    <property type="entry name" value="Urease, subunit C, domain 1"/>
    <property type="match status" value="1"/>
</dbReference>
<dbReference type="HAMAP" id="MF_01645">
    <property type="entry name" value="Hydantoinase"/>
    <property type="match status" value="1"/>
</dbReference>
<dbReference type="InterPro" id="IPR017593">
    <property type="entry name" value="Allantoinase"/>
</dbReference>
<dbReference type="InterPro" id="IPR047604">
    <property type="entry name" value="Allantoinase_bact"/>
</dbReference>
<dbReference type="InterPro" id="IPR006680">
    <property type="entry name" value="Amidohydro-rel"/>
</dbReference>
<dbReference type="InterPro" id="IPR050138">
    <property type="entry name" value="DHOase/Allantoinase_Hydrolase"/>
</dbReference>
<dbReference type="InterPro" id="IPR011059">
    <property type="entry name" value="Metal-dep_hydrolase_composite"/>
</dbReference>
<dbReference type="InterPro" id="IPR032466">
    <property type="entry name" value="Metal_Hydrolase"/>
</dbReference>
<dbReference type="NCBIfam" id="TIGR03178">
    <property type="entry name" value="allantoinase"/>
    <property type="match status" value="1"/>
</dbReference>
<dbReference type="NCBIfam" id="NF005960">
    <property type="entry name" value="PRK08044.1"/>
    <property type="match status" value="1"/>
</dbReference>
<dbReference type="PANTHER" id="PTHR43668">
    <property type="entry name" value="ALLANTOINASE"/>
    <property type="match status" value="1"/>
</dbReference>
<dbReference type="PANTHER" id="PTHR43668:SF4">
    <property type="entry name" value="ALLANTOINASE"/>
    <property type="match status" value="1"/>
</dbReference>
<dbReference type="Pfam" id="PF01979">
    <property type="entry name" value="Amidohydro_1"/>
    <property type="match status" value="1"/>
</dbReference>
<dbReference type="SUPFAM" id="SSF51338">
    <property type="entry name" value="Composite domain of metallo-dependent hydrolases"/>
    <property type="match status" value="1"/>
</dbReference>
<dbReference type="SUPFAM" id="SSF51556">
    <property type="entry name" value="Metallo-dependent hydrolases"/>
    <property type="match status" value="1"/>
</dbReference>
<sequence length="454" mass="49488">MNFDSIIKNGLVILENGEQEVEVGIKDGKIAAIGQDLGTSAKIIDAKGSIVSPGMIDAHVHITEPGGGYRDEWEGYDTGTRAAAKGGVTTFIEMPLNQVPATVDEESIQEKFKAGKGKLSVDVASYGGLVPFDLDGGIQELDSNGVVAYKCFLATCGDRSIEGDFMNVDDYSLYEGMKQIAKTGKILSIHAENAAITDKLGEIASKNGETSLRAYVDSRPVFTEVEPIRKIILFAKETGCRVHIVHIACEEGVDEIVKAQQEGVDITCETCTHYLYFYKEELDHIGPVVKCSPPIREQSRLEGMWNRVLNGDISFVTSDHSPCTPDLKATDNAFEAWGGIAGLQNNVDVLFDEGVQKRNMPLSKFAAIIATNPAKRFNLASKGSIAVGKDADFVFIKKDAPYELKAEDLAYRHKISPYIGRKIGAQVVKTILRGVEIYDKEKGISNEKVGRFIP</sequence>